<feature type="chain" id="PRO_0000406563" description="Uncharacterized gene 12 protein">
    <location>
        <begin position="1"/>
        <end position="384"/>
    </location>
</feature>
<feature type="region of interest" description="Disordered" evidence="1">
    <location>
        <begin position="133"/>
        <end position="257"/>
    </location>
</feature>
<feature type="region of interest" description="Disordered" evidence="1">
    <location>
        <begin position="297"/>
        <end position="368"/>
    </location>
</feature>
<feature type="compositionally biased region" description="Low complexity" evidence="1">
    <location>
        <begin position="143"/>
        <end position="157"/>
    </location>
</feature>
<feature type="compositionally biased region" description="Acidic residues" evidence="1">
    <location>
        <begin position="302"/>
        <end position="315"/>
    </location>
</feature>
<feature type="compositionally biased region" description="Basic and acidic residues" evidence="1">
    <location>
        <begin position="316"/>
        <end position="342"/>
    </location>
</feature>
<feature type="compositionally biased region" description="Basic residues" evidence="1">
    <location>
        <begin position="343"/>
        <end position="363"/>
    </location>
</feature>
<proteinExistence type="predicted"/>
<reference key="1">
    <citation type="journal article" date="2000" name="J. Virol.">
        <title>The genome of a very virulent Marek's disease virus.</title>
        <authorList>
            <person name="Tulman E.R."/>
            <person name="Afonso C.L."/>
            <person name="Lu Z."/>
            <person name="Zsak L."/>
            <person name="Rock D.L."/>
            <person name="Kutish G.F."/>
        </authorList>
    </citation>
    <scope>NUCLEOTIDE SEQUENCE [LARGE SCALE GENOMIC DNA]</scope>
</reference>
<organism>
    <name type="scientific">Gallid herpesvirus 2 (strain Chicken/Md5/ATCC VR-987)</name>
    <name type="common">GaHV-2</name>
    <name type="synonym">Marek's disease herpesvirus type 1</name>
    <dbReference type="NCBI Taxonomy" id="10389"/>
    <lineage>
        <taxon>Viruses</taxon>
        <taxon>Duplodnaviria</taxon>
        <taxon>Heunggongvirae</taxon>
        <taxon>Peploviricota</taxon>
        <taxon>Herviviricetes</taxon>
        <taxon>Herpesvirales</taxon>
        <taxon>Orthoherpesviridae</taxon>
        <taxon>Alphaherpesvirinae</taxon>
        <taxon>Mardivirus</taxon>
        <taxon>Mardivirus gallidalpha2</taxon>
        <taxon>Gallid alphaherpesvirus 2</taxon>
    </lineage>
</organism>
<name>VG12_GAHVM</name>
<gene>
    <name type="primary">MDV012</name>
</gene>
<evidence type="ECO:0000256" key="1">
    <source>
        <dbReference type="SAM" id="MobiDB-lite"/>
    </source>
</evidence>
<dbReference type="EMBL" id="AF243438">
    <property type="protein sequence ID" value="AAG14192.1"/>
    <property type="molecule type" value="Genomic_DNA"/>
</dbReference>
<dbReference type="Proteomes" id="UP000008072">
    <property type="component" value="Segment"/>
</dbReference>
<dbReference type="InterPro" id="IPR010883">
    <property type="entry name" value="Marek_disease_virus_LORF3"/>
</dbReference>
<dbReference type="Pfam" id="PF07420">
    <property type="entry name" value="DUF1509"/>
    <property type="match status" value="1"/>
</dbReference>
<protein>
    <recommendedName>
        <fullName>Uncharacterized gene 12 protein</fullName>
    </recommendedName>
</protein>
<accession>Q9E6R3</accession>
<organismHost>
    <name type="scientific">Gallus gallus</name>
    <name type="common">Chicken</name>
    <dbReference type="NCBI Taxonomy" id="9031"/>
</organismHost>
<keyword id="KW-1185">Reference proteome</keyword>
<sequence>MFTGGGTIALIERLATSWLTAIRLILSWHPIHAPNRNQEPLDSLCREGREYIVMISGTVHPRHATWPFWQVMRKCLDWCCAFHPPDDHSCEFGAPRIGIRLEGENHFFAPILGLYSVVMTWSPISCYREFPIRQNSKEPDPQPSTSSEPEPQPSTSSHRNIPVARVRPLVAQQKVPKTRPLDTEIHRPGPIAIQNPTDTDEPELRLNPRPRPGPSGQNTRPRTPTLDLDTVVVRDHPVTHRRPRSPSPPEEDYTNQDENLSYTPQLIHSSPDSEVAEEIYAQPDPWGTQELLLANRERTPDDQTDITDDSADWSEGETRRPSHSEVGERRLSRENNSEDPNRSRSRSRSRERRRRRPRVRPGRRSTATTIRDLVVLGMSSSDDE</sequence>